<sequence length="314" mass="34161">MAFATRQLVRSLSSSSTAAASAKKILVKHVTVIGGGLMGAGIAQVAAATGHTVVLVDQTEDILAKSKKGIEESLRKVAKKKFAENPKAGDEFVEKTLSSISTSTDAASVVHSTDLVVEAIVENLKVKSELFKRLDKFAAEHTIFASNTSSLQITSLANATTRQDRFAGLHFFNPVPLMKLVEVVKTPMTSQKTLESLVDFSKTLGKHPVSCKDTPGFIVNRLLVPYLIEAVRLYERGDASKEDIDTAMKLGAGYPMGPFELLDYVGLDTTKFIIDGWHEMDSQNPLFQPSPAMNKLVAENKFGKKTGEGFYKYK</sequence>
<name>HCDH_PIG</name>
<protein>
    <recommendedName>
        <fullName>Hydroxyacyl-coenzyme A dehydrogenase, mitochondrial</fullName>
        <shortName>HCDH</shortName>
        <ecNumber evidence="3 5">1.1.1.35</ecNumber>
    </recommendedName>
    <alternativeName>
        <fullName evidence="6">L-3-hydroxyacyl CoA dehydrogenase</fullName>
    </alternativeName>
    <alternativeName>
        <fullName>Medium and short-chain L-3-hydroxyacyl-coenzyme A dehydrogenase</fullName>
    </alternativeName>
    <alternativeName>
        <fullName>Short-chain 3-hydroxyacyl-CoA dehydrogenase</fullName>
    </alternativeName>
</protein>
<feature type="transit peptide" description="Mitochondrion" evidence="1">
    <location>
        <begin position="1"/>
        <end position="12"/>
    </location>
</feature>
<feature type="chain" id="PRO_0000007408" description="Hydroxyacyl-coenzyme A dehydrogenase, mitochondrial">
    <location>
        <begin position="13"/>
        <end position="314"/>
    </location>
</feature>
<feature type="binding site" evidence="4">
    <location>
        <begin position="34"/>
        <end position="39"/>
    </location>
    <ligand>
        <name>NAD(+)</name>
        <dbReference type="ChEBI" id="CHEBI:57540"/>
    </ligand>
</feature>
<feature type="binding site" evidence="4">
    <location>
        <position position="57"/>
    </location>
    <ligand>
        <name>NAD(+)</name>
        <dbReference type="ChEBI" id="CHEBI:57540"/>
    </ligand>
</feature>
<feature type="binding site" evidence="1">
    <location>
        <position position="73"/>
    </location>
    <ligand>
        <name>CoA</name>
        <dbReference type="ChEBI" id="CHEBI:57287"/>
    </ligand>
</feature>
<feature type="binding site" evidence="1">
    <location>
        <position position="80"/>
    </location>
    <ligand>
        <name>CoA</name>
        <dbReference type="ChEBI" id="CHEBI:57287"/>
    </ligand>
</feature>
<feature type="binding site" evidence="4">
    <location>
        <position position="122"/>
    </location>
    <ligand>
        <name>NAD(+)</name>
        <dbReference type="ChEBI" id="CHEBI:57540"/>
    </ligand>
</feature>
<feature type="binding site" evidence="4">
    <location>
        <position position="127"/>
    </location>
    <ligand>
        <name>NAD(+)</name>
        <dbReference type="ChEBI" id="CHEBI:57540"/>
    </ligand>
</feature>
<feature type="binding site" evidence="1">
    <location>
        <position position="149"/>
    </location>
    <ligand>
        <name>CoA</name>
        <dbReference type="ChEBI" id="CHEBI:57287"/>
    </ligand>
</feature>
<feature type="binding site" evidence="4">
    <location>
        <position position="149"/>
    </location>
    <ligand>
        <name>NAD(+)</name>
        <dbReference type="ChEBI" id="CHEBI:57540"/>
    </ligand>
</feature>
<feature type="binding site" evidence="1">
    <location>
        <position position="173"/>
    </location>
    <ligand>
        <name>NAD(+)</name>
        <dbReference type="ChEBI" id="CHEBI:57540"/>
    </ligand>
</feature>
<feature type="binding site" evidence="1">
    <location>
        <position position="305"/>
    </location>
    <ligand>
        <name>NAD(+)</name>
        <dbReference type="ChEBI" id="CHEBI:57540"/>
    </ligand>
</feature>
<feature type="site" description="Important for catalytic activity" evidence="1">
    <location>
        <position position="170"/>
    </location>
</feature>
<feature type="modified residue" description="N6-succinyllysine" evidence="2">
    <location>
        <position position="80"/>
    </location>
</feature>
<feature type="modified residue" description="N6-acetyllysine; alternate" evidence="2">
    <location>
        <position position="81"/>
    </location>
</feature>
<feature type="modified residue" description="N6-succinyllysine; alternate" evidence="2">
    <location>
        <position position="81"/>
    </location>
</feature>
<feature type="modified residue" description="N6-acetyllysine; alternate" evidence="2">
    <location>
        <position position="87"/>
    </location>
</feature>
<feature type="modified residue" description="N6-succinyllysine; alternate" evidence="2">
    <location>
        <position position="87"/>
    </location>
</feature>
<feature type="modified residue" description="N6-acetyllysine" evidence="2">
    <location>
        <position position="125"/>
    </location>
</feature>
<feature type="modified residue" description="N6-(2-hydroxyisobutyryl)lysine" evidence="1">
    <location>
        <position position="127"/>
    </location>
</feature>
<feature type="modified residue" description="N6-acetyllysine; alternate" evidence="2">
    <location>
        <position position="136"/>
    </location>
</feature>
<feature type="modified residue" description="N6-succinyllysine; alternate" evidence="2">
    <location>
        <position position="136"/>
    </location>
</feature>
<feature type="modified residue" description="N6-acetyllysine" evidence="2">
    <location>
        <position position="179"/>
    </location>
</feature>
<feature type="modified residue" description="N6-acetyllysine; alternate" evidence="1">
    <location>
        <position position="185"/>
    </location>
</feature>
<feature type="modified residue" description="N6-succinyllysine; alternate" evidence="2">
    <location>
        <position position="185"/>
    </location>
</feature>
<feature type="modified residue" description="N6-acetyllysine; alternate" evidence="2">
    <location>
        <position position="192"/>
    </location>
</feature>
<feature type="modified residue" description="N6-succinyllysine; alternate" evidence="2">
    <location>
        <position position="192"/>
    </location>
</feature>
<feature type="modified residue" description="N6-acetyllysine; alternate" evidence="1">
    <location>
        <position position="202"/>
    </location>
</feature>
<feature type="modified residue" description="N6-succinyllysine; alternate" evidence="2">
    <location>
        <position position="202"/>
    </location>
</feature>
<feature type="modified residue" description="N6-succinyllysine" evidence="2">
    <location>
        <position position="206"/>
    </location>
</feature>
<feature type="modified residue" description="N6-acetyllysine; alternate" evidence="2">
    <location>
        <position position="212"/>
    </location>
</feature>
<feature type="modified residue" description="N6-succinyllysine; alternate" evidence="2">
    <location>
        <position position="212"/>
    </location>
</feature>
<feature type="modified residue" description="N6-acetyllysine; alternate" evidence="1">
    <location>
        <position position="241"/>
    </location>
</feature>
<feature type="modified residue" description="N6-succinyllysine; alternate" evidence="2">
    <location>
        <position position="241"/>
    </location>
</feature>
<feature type="modified residue" description="N6-acetyllysine; alternate" evidence="1">
    <location>
        <position position="312"/>
    </location>
</feature>
<feature type="modified residue" description="N6-succinyllysine; alternate" evidence="2">
    <location>
        <position position="312"/>
    </location>
</feature>
<feature type="sequence conflict" description="In Ref. 2; AA sequence." evidence="7" ref="2">
    <original>S</original>
    <variation>A</variation>
    <location>
        <position position="108"/>
    </location>
</feature>
<feature type="sequence conflict" description="In Ref. 2; AA sequence." evidence="7" ref="2">
    <original>E</original>
    <variation>EQLKVVGE</variation>
    <location>
        <position position="122"/>
    </location>
</feature>
<feature type="sequence conflict" description="In Ref. 2; AA sequence." evidence="7" ref="2">
    <original>FNP</original>
    <variation>N</variation>
    <location>
        <begin position="172"/>
        <end position="174"/>
    </location>
</feature>
<feature type="strand" evidence="8">
    <location>
        <begin position="29"/>
        <end position="33"/>
    </location>
</feature>
<feature type="helix" evidence="8">
    <location>
        <begin position="37"/>
        <end position="48"/>
    </location>
</feature>
<feature type="strand" evidence="8">
    <location>
        <begin position="52"/>
        <end position="56"/>
    </location>
</feature>
<feature type="helix" evidence="8">
    <location>
        <begin position="60"/>
        <end position="81"/>
    </location>
</feature>
<feature type="turn" evidence="8">
    <location>
        <begin position="82"/>
        <end position="84"/>
    </location>
</feature>
<feature type="helix" evidence="8">
    <location>
        <begin position="86"/>
        <end position="98"/>
    </location>
</feature>
<feature type="strand" evidence="8">
    <location>
        <begin position="100"/>
        <end position="104"/>
    </location>
</feature>
<feature type="helix" evidence="8">
    <location>
        <begin position="106"/>
        <end position="108"/>
    </location>
</feature>
<feature type="strand" evidence="8">
    <location>
        <begin position="110"/>
        <end position="112"/>
    </location>
</feature>
<feature type="strand" evidence="8">
    <location>
        <begin position="114"/>
        <end position="118"/>
    </location>
</feature>
<feature type="helix" evidence="8">
    <location>
        <begin position="124"/>
        <end position="137"/>
    </location>
</feature>
<feature type="strand" evidence="8">
    <location>
        <begin position="143"/>
        <end position="146"/>
    </location>
</feature>
<feature type="strand" evidence="8">
    <location>
        <begin position="149"/>
        <end position="151"/>
    </location>
</feature>
<feature type="helix" evidence="8">
    <location>
        <begin position="153"/>
        <end position="157"/>
    </location>
</feature>
<feature type="helix" evidence="8">
    <location>
        <begin position="163"/>
        <end position="165"/>
    </location>
</feature>
<feature type="strand" evidence="8">
    <location>
        <begin position="166"/>
        <end position="170"/>
    </location>
</feature>
<feature type="turn" evidence="8">
    <location>
        <begin position="175"/>
        <end position="177"/>
    </location>
</feature>
<feature type="strand" evidence="8">
    <location>
        <begin position="180"/>
        <end position="185"/>
    </location>
</feature>
<feature type="helix" evidence="8">
    <location>
        <begin position="191"/>
        <end position="203"/>
    </location>
</feature>
<feature type="strand" evidence="8">
    <location>
        <begin position="207"/>
        <end position="213"/>
    </location>
</feature>
<feature type="turn" evidence="8">
    <location>
        <begin position="215"/>
        <end position="218"/>
    </location>
</feature>
<feature type="helix" evidence="8">
    <location>
        <begin position="219"/>
        <end position="235"/>
    </location>
</feature>
<feature type="helix" evidence="8">
    <location>
        <begin position="241"/>
        <end position="252"/>
    </location>
</feature>
<feature type="helix" evidence="8">
    <location>
        <begin position="258"/>
        <end position="265"/>
    </location>
</feature>
<feature type="helix" evidence="8">
    <location>
        <begin position="267"/>
        <end position="279"/>
    </location>
</feature>
<feature type="turn" evidence="8">
    <location>
        <begin position="280"/>
        <end position="283"/>
    </location>
</feature>
<feature type="helix" evidence="8">
    <location>
        <begin position="285"/>
        <end position="287"/>
    </location>
</feature>
<feature type="helix" evidence="8">
    <location>
        <begin position="291"/>
        <end position="298"/>
    </location>
</feature>
<feature type="turn" evidence="8">
    <location>
        <begin position="304"/>
        <end position="307"/>
    </location>
</feature>
<feature type="strand" evidence="8">
    <location>
        <begin position="308"/>
        <end position="312"/>
    </location>
</feature>
<evidence type="ECO:0000250" key="1">
    <source>
        <dbReference type="UniProtKB" id="Q16836"/>
    </source>
</evidence>
<evidence type="ECO:0000250" key="2">
    <source>
        <dbReference type="UniProtKB" id="Q61425"/>
    </source>
</evidence>
<evidence type="ECO:0000269" key="3">
    <source>
    </source>
</evidence>
<evidence type="ECO:0000269" key="4">
    <source>
    </source>
</evidence>
<evidence type="ECO:0000269" key="5">
    <source>
    </source>
</evidence>
<evidence type="ECO:0000303" key="6">
    <source>
    </source>
</evidence>
<evidence type="ECO:0000305" key="7"/>
<evidence type="ECO:0007829" key="8">
    <source>
        <dbReference type="PDB" id="3HDH"/>
    </source>
</evidence>
<dbReference type="EC" id="1.1.1.35" evidence="3 5"/>
<dbReference type="EMBL" id="AF027652">
    <property type="protein sequence ID" value="AAD20939.1"/>
    <property type="molecule type" value="mRNA"/>
</dbReference>
<dbReference type="PIR" id="T46866">
    <property type="entry name" value="T46866"/>
</dbReference>
<dbReference type="RefSeq" id="NP_999496.1">
    <property type="nucleotide sequence ID" value="NM_214331.1"/>
</dbReference>
<dbReference type="PDB" id="3HDH">
    <property type="method" value="X-ray"/>
    <property type="resolution" value="2.80 A"/>
    <property type="chains" value="A/B/C=13-314"/>
</dbReference>
<dbReference type="PDBsum" id="3HDH"/>
<dbReference type="SMR" id="P00348"/>
<dbReference type="FunCoup" id="P00348">
    <property type="interactions" value="989"/>
</dbReference>
<dbReference type="STRING" id="9823.ENSSSCP00000053505"/>
<dbReference type="PaxDb" id="9823-ENSSSCP00000009757"/>
<dbReference type="PeptideAtlas" id="P00348"/>
<dbReference type="Ensembl" id="ENSSSCT00000049871.3">
    <property type="protein sequence ID" value="ENSSSCP00000053505.1"/>
    <property type="gene ID" value="ENSSSCG00000009150.4"/>
</dbReference>
<dbReference type="Ensembl" id="ENSSSCT00015021821.1">
    <property type="protein sequence ID" value="ENSSSCP00015008559.1"/>
    <property type="gene ID" value="ENSSSCG00015016364.1"/>
</dbReference>
<dbReference type="Ensembl" id="ENSSSCT00025056558.1">
    <property type="protein sequence ID" value="ENSSSCP00025023930.1"/>
    <property type="gene ID" value="ENSSSCG00025041615.1"/>
</dbReference>
<dbReference type="Ensembl" id="ENSSSCT00030004417.1">
    <property type="protein sequence ID" value="ENSSSCP00030001758.1"/>
    <property type="gene ID" value="ENSSSCG00030003353.1"/>
</dbReference>
<dbReference type="Ensembl" id="ENSSSCT00035031118.1">
    <property type="protein sequence ID" value="ENSSSCP00035012173.1"/>
    <property type="gene ID" value="ENSSSCG00035023707.1"/>
</dbReference>
<dbReference type="Ensembl" id="ENSSSCT00040103510.1">
    <property type="protein sequence ID" value="ENSSSCP00040046934.1"/>
    <property type="gene ID" value="ENSSSCG00040074801.1"/>
</dbReference>
<dbReference type="Ensembl" id="ENSSSCT00045041276.1">
    <property type="protein sequence ID" value="ENSSSCP00045028650.1"/>
    <property type="gene ID" value="ENSSSCG00045024125.1"/>
</dbReference>
<dbReference type="Ensembl" id="ENSSSCT00050020134.1">
    <property type="protein sequence ID" value="ENSSSCP00050008385.1"/>
    <property type="gene ID" value="ENSSSCG00050014864.1"/>
</dbReference>
<dbReference type="Ensembl" id="ENSSSCT00055013484.1">
    <property type="protein sequence ID" value="ENSSSCP00055010607.1"/>
    <property type="gene ID" value="ENSSSCG00055006902.1"/>
</dbReference>
<dbReference type="Ensembl" id="ENSSSCT00060105557.1">
    <property type="protein sequence ID" value="ENSSSCP00060046413.1"/>
    <property type="gene ID" value="ENSSSCG00060076804.1"/>
</dbReference>
<dbReference type="Ensembl" id="ENSSSCT00065008871.1">
    <property type="protein sequence ID" value="ENSSSCP00065003731.1"/>
    <property type="gene ID" value="ENSSSCG00065006573.1"/>
</dbReference>
<dbReference type="Ensembl" id="ENSSSCT00070038976.1">
    <property type="protein sequence ID" value="ENSSSCP00070032640.1"/>
    <property type="gene ID" value="ENSSSCG00070019666.1"/>
</dbReference>
<dbReference type="Ensembl" id="ENSSSCT00070039014.1">
    <property type="protein sequence ID" value="ENSSSCP00070032672.1"/>
    <property type="gene ID" value="ENSSSCG00070019666.1"/>
</dbReference>
<dbReference type="Ensembl" id="ENSSSCT00085024902">
    <property type="protein sequence ID" value="ENSSSCP00085017221"/>
    <property type="gene ID" value="ENSSSCG00085013181"/>
</dbReference>
<dbReference type="Ensembl" id="ENSSSCT00090036805">
    <property type="protein sequence ID" value="ENSSSCP00090022920"/>
    <property type="gene ID" value="ENSSSCG00090020753"/>
</dbReference>
<dbReference type="Ensembl" id="ENSSSCT00105046690">
    <property type="protein sequence ID" value="ENSSSCP00105032536"/>
    <property type="gene ID" value="ENSSSCG00105024610"/>
</dbReference>
<dbReference type="Ensembl" id="ENSSSCT00110006224">
    <property type="protein sequence ID" value="ENSSSCP00110004570"/>
    <property type="gene ID" value="ENSSSCG00110003112"/>
</dbReference>
<dbReference type="Ensembl" id="ENSSSCT00115022066">
    <property type="protein sequence ID" value="ENSSSCP00115020900"/>
    <property type="gene ID" value="ENSSSCG00115012776"/>
</dbReference>
<dbReference type="Ensembl" id="ENSSSCT00130035956">
    <property type="protein sequence ID" value="ENSSSCP00130025172"/>
    <property type="gene ID" value="ENSSSCG00130018429"/>
</dbReference>
<dbReference type="GeneID" id="397604"/>
<dbReference type="KEGG" id="ssc:397604"/>
<dbReference type="CTD" id="3033"/>
<dbReference type="VGNC" id="VGNC:88771">
    <property type="gene designation" value="HADH"/>
</dbReference>
<dbReference type="eggNOG" id="KOG2304">
    <property type="taxonomic scope" value="Eukaryota"/>
</dbReference>
<dbReference type="GeneTree" id="ENSGT00940000159984"/>
<dbReference type="HOGENOM" id="CLU_009834_2_0_1"/>
<dbReference type="InParanoid" id="P00348"/>
<dbReference type="OMA" id="MAHPMGP"/>
<dbReference type="OrthoDB" id="5958943at2759"/>
<dbReference type="TreeFam" id="TF300886"/>
<dbReference type="Reactome" id="R-SSC-77310">
    <property type="pathway name" value="Beta oxidation of lauroyl-CoA to decanoyl-CoA-CoA"/>
</dbReference>
<dbReference type="Reactome" id="R-SSC-77346">
    <property type="pathway name" value="Beta oxidation of decanoyl-CoA to octanoyl-CoA-CoA"/>
</dbReference>
<dbReference type="Reactome" id="R-SSC-77348">
    <property type="pathway name" value="Beta oxidation of octanoyl-CoA to hexanoyl-CoA"/>
</dbReference>
<dbReference type="Reactome" id="R-SSC-77350">
    <property type="pathway name" value="Beta oxidation of hexanoyl-CoA to butanoyl-CoA"/>
</dbReference>
<dbReference type="Reactome" id="R-SSC-77352">
    <property type="pathway name" value="Beta oxidation of butanoyl-CoA to acetyl-CoA"/>
</dbReference>
<dbReference type="Reactome" id="R-SSC-9837999">
    <property type="pathway name" value="Mitochondrial protein degradation"/>
</dbReference>
<dbReference type="SABIO-RK" id="P00348"/>
<dbReference type="UniPathway" id="UPA00659"/>
<dbReference type="EvolutionaryTrace" id="P00348"/>
<dbReference type="Proteomes" id="UP000008227">
    <property type="component" value="Chromosome 8"/>
</dbReference>
<dbReference type="Proteomes" id="UP000314985">
    <property type="component" value="Chromosome 8"/>
</dbReference>
<dbReference type="Proteomes" id="UP000694570">
    <property type="component" value="Unplaced"/>
</dbReference>
<dbReference type="Proteomes" id="UP000694571">
    <property type="component" value="Unplaced"/>
</dbReference>
<dbReference type="Proteomes" id="UP000694720">
    <property type="component" value="Unplaced"/>
</dbReference>
<dbReference type="Proteomes" id="UP000694722">
    <property type="component" value="Unplaced"/>
</dbReference>
<dbReference type="Proteomes" id="UP000694723">
    <property type="component" value="Unplaced"/>
</dbReference>
<dbReference type="Proteomes" id="UP000694724">
    <property type="component" value="Unplaced"/>
</dbReference>
<dbReference type="Proteomes" id="UP000694725">
    <property type="component" value="Unplaced"/>
</dbReference>
<dbReference type="Proteomes" id="UP000694726">
    <property type="component" value="Unplaced"/>
</dbReference>
<dbReference type="Proteomes" id="UP000694727">
    <property type="component" value="Unplaced"/>
</dbReference>
<dbReference type="Proteomes" id="UP000694728">
    <property type="component" value="Unplaced"/>
</dbReference>
<dbReference type="Bgee" id="ENSSSCG00000009150">
    <property type="expression patterns" value="Expressed in adult mammalian kidney and 46 other cell types or tissues"/>
</dbReference>
<dbReference type="ExpressionAtlas" id="P00348">
    <property type="expression patterns" value="baseline and differential"/>
</dbReference>
<dbReference type="GO" id="GO:0005759">
    <property type="term" value="C:mitochondrial matrix"/>
    <property type="evidence" value="ECO:0007669"/>
    <property type="project" value="UniProtKB-SubCell"/>
</dbReference>
<dbReference type="GO" id="GO:0005739">
    <property type="term" value="C:mitochondrion"/>
    <property type="evidence" value="ECO:0000318"/>
    <property type="project" value="GO_Central"/>
</dbReference>
<dbReference type="GO" id="GO:0005654">
    <property type="term" value="C:nucleoplasm"/>
    <property type="evidence" value="ECO:0007669"/>
    <property type="project" value="Ensembl"/>
</dbReference>
<dbReference type="GO" id="GO:0003857">
    <property type="term" value="F:3-hydroxyacyl-CoA dehydrogenase activity"/>
    <property type="evidence" value="ECO:0000314"/>
    <property type="project" value="UniProtKB"/>
</dbReference>
<dbReference type="GO" id="GO:0042802">
    <property type="term" value="F:identical protein binding"/>
    <property type="evidence" value="ECO:0000314"/>
    <property type="project" value="UniProtKB"/>
</dbReference>
<dbReference type="GO" id="GO:0070403">
    <property type="term" value="F:NAD+ binding"/>
    <property type="evidence" value="ECO:0000250"/>
    <property type="project" value="UniProtKB"/>
</dbReference>
<dbReference type="GO" id="GO:0030154">
    <property type="term" value="P:cell differentiation"/>
    <property type="evidence" value="ECO:0007669"/>
    <property type="project" value="UniProtKB-KW"/>
</dbReference>
<dbReference type="GO" id="GO:0006635">
    <property type="term" value="P:fatty acid beta-oxidation"/>
    <property type="evidence" value="ECO:0000314"/>
    <property type="project" value="UniProtKB"/>
</dbReference>
<dbReference type="GO" id="GO:0120162">
    <property type="term" value="P:positive regulation of cold-induced thermogenesis"/>
    <property type="evidence" value="ECO:0007669"/>
    <property type="project" value="Ensembl"/>
</dbReference>
<dbReference type="GO" id="GO:0050796">
    <property type="term" value="P:regulation of insulin secretion"/>
    <property type="evidence" value="ECO:0000250"/>
    <property type="project" value="UniProtKB"/>
</dbReference>
<dbReference type="GO" id="GO:0007283">
    <property type="term" value="P:spermatogenesis"/>
    <property type="evidence" value="ECO:0007669"/>
    <property type="project" value="UniProtKB-KW"/>
</dbReference>
<dbReference type="FunFam" id="1.10.1040.10:FF:000019">
    <property type="entry name" value="3-hydroxybutyryl-CoA dehydrogenase FadB2"/>
    <property type="match status" value="1"/>
</dbReference>
<dbReference type="FunFam" id="3.40.50.720:FF:000258">
    <property type="entry name" value="Hydroxyacyl-coenzyme A dehydrogenase, mitochondrial"/>
    <property type="match status" value="1"/>
</dbReference>
<dbReference type="Gene3D" id="1.10.1040.10">
    <property type="entry name" value="N-(1-d-carboxylethyl)-l-norvaline Dehydrogenase, domain 2"/>
    <property type="match status" value="1"/>
</dbReference>
<dbReference type="Gene3D" id="3.40.50.720">
    <property type="entry name" value="NAD(P)-binding Rossmann-like Domain"/>
    <property type="match status" value="1"/>
</dbReference>
<dbReference type="InterPro" id="IPR022694">
    <property type="entry name" value="3-OHacyl-CoA_DH"/>
</dbReference>
<dbReference type="InterPro" id="IPR006180">
    <property type="entry name" value="3-OHacyl-CoA_DH_CS"/>
</dbReference>
<dbReference type="InterPro" id="IPR006176">
    <property type="entry name" value="3-OHacyl-CoA_DH_NAD-bd"/>
</dbReference>
<dbReference type="InterPro" id="IPR006108">
    <property type="entry name" value="3HC_DH_C"/>
</dbReference>
<dbReference type="InterPro" id="IPR008927">
    <property type="entry name" value="6-PGluconate_DH-like_C_sf"/>
</dbReference>
<dbReference type="InterPro" id="IPR013328">
    <property type="entry name" value="6PGD_dom2"/>
</dbReference>
<dbReference type="InterPro" id="IPR052242">
    <property type="entry name" value="Mito_3-hydroxyacyl-CoA_DH"/>
</dbReference>
<dbReference type="InterPro" id="IPR036291">
    <property type="entry name" value="NAD(P)-bd_dom_sf"/>
</dbReference>
<dbReference type="PANTHER" id="PTHR43561">
    <property type="match status" value="1"/>
</dbReference>
<dbReference type="PANTHER" id="PTHR43561:SF3">
    <property type="entry name" value="HYDROXYACYL-COENZYME A DEHYDROGENASE, MITOCHONDRIAL"/>
    <property type="match status" value="1"/>
</dbReference>
<dbReference type="Pfam" id="PF00725">
    <property type="entry name" value="3HCDH"/>
    <property type="match status" value="1"/>
</dbReference>
<dbReference type="Pfam" id="PF02737">
    <property type="entry name" value="3HCDH_N"/>
    <property type="match status" value="1"/>
</dbReference>
<dbReference type="PIRSF" id="PIRSF000105">
    <property type="entry name" value="HCDH"/>
    <property type="match status" value="1"/>
</dbReference>
<dbReference type="SUPFAM" id="SSF48179">
    <property type="entry name" value="6-phosphogluconate dehydrogenase C-terminal domain-like"/>
    <property type="match status" value="1"/>
</dbReference>
<dbReference type="SUPFAM" id="SSF51735">
    <property type="entry name" value="NAD(P)-binding Rossmann-fold domains"/>
    <property type="match status" value="1"/>
</dbReference>
<dbReference type="PROSITE" id="PS00067">
    <property type="entry name" value="3HCDH"/>
    <property type="match status" value="1"/>
</dbReference>
<gene>
    <name type="primary">HADH</name>
    <name type="synonym">HAD</name>
    <name type="synonym">HADHSC</name>
    <name type="synonym">SCHAD</name>
</gene>
<proteinExistence type="evidence at protein level"/>
<keyword id="KW-0002">3D-structure</keyword>
<keyword id="KW-0007">Acetylation</keyword>
<keyword id="KW-0221">Differentiation</keyword>
<keyword id="KW-0903">Direct protein sequencing</keyword>
<keyword id="KW-0276">Fatty acid metabolism</keyword>
<keyword id="KW-0379">Hydroxylation</keyword>
<keyword id="KW-0443">Lipid metabolism</keyword>
<keyword id="KW-0496">Mitochondrion</keyword>
<keyword id="KW-0520">NAD</keyword>
<keyword id="KW-0560">Oxidoreductase</keyword>
<keyword id="KW-1185">Reference proteome</keyword>
<keyword id="KW-0744">Spermatogenesis</keyword>
<keyword id="KW-0809">Transit peptide</keyword>
<organism>
    <name type="scientific">Sus scrofa</name>
    <name type="common">Pig</name>
    <dbReference type="NCBI Taxonomy" id="9823"/>
    <lineage>
        <taxon>Eukaryota</taxon>
        <taxon>Metazoa</taxon>
        <taxon>Chordata</taxon>
        <taxon>Craniata</taxon>
        <taxon>Vertebrata</taxon>
        <taxon>Euteleostomi</taxon>
        <taxon>Mammalia</taxon>
        <taxon>Eutheria</taxon>
        <taxon>Laurasiatheria</taxon>
        <taxon>Artiodactyla</taxon>
        <taxon>Suina</taxon>
        <taxon>Suidae</taxon>
        <taxon>Sus</taxon>
    </lineage>
</organism>
<accession>P00348</accession>
<accession>Q9XS66</accession>
<reference key="1">
    <citation type="journal article" date="1998" name="Biochim. Biophys. Acta">
        <title>Molecular cloning, expression in Escherichia coli, and characterization of a novel L-3-hydroxyacyl coenzyme A dehydrogenase from pig liver.</title>
        <authorList>
            <person name="He X.-Y."/>
            <person name="Yang S.-Y."/>
        </authorList>
    </citation>
    <scope>NUCLEOTIDE SEQUENCE [MRNA]</scope>
    <scope>FUNCTION</scope>
    <scope>CATALYTIC ACTIVITY</scope>
    <scope>SUBUNIT</scope>
    <source>
        <tissue>Liver</tissue>
    </source>
</reference>
<reference key="2">
    <citation type="journal article" date="1980" name="FEBS Lett.">
        <title>Amino acid sequence of L-3-hydroxyacyl CoA dehydrogenase from pig heart muscle.</title>
        <authorList>
            <person name="Bitar K.G."/>
            <person name="Perez-Aranda A."/>
            <person name="Bradshaw R.A."/>
        </authorList>
    </citation>
    <scope>PROTEIN SEQUENCE OF 13-314</scope>
    <source>
        <tissue>Heart</tissue>
    </source>
</reference>
<reference key="3">
    <citation type="submission" date="1982-10" db="PIR data bank">
        <authorList>
            <person name="Fang J.-K."/>
            <person name="Bradshaw R.A."/>
        </authorList>
    </citation>
    <scope>SEQUENCE REVISION TO 16 AND 21</scope>
</reference>
<reference key="4">
    <citation type="journal article" date="1989" name="Anal. Biochem.">
        <title>Assay of L-3-hydroxyacyl-coenzyme A dehydrogenase with substrates of different chain lengths.</title>
        <authorList>
            <person name="He X.Y."/>
            <person name="Yang S.Y."/>
            <person name="Schulz H."/>
        </authorList>
    </citation>
    <scope>CATALYTIC ACTIVITY</scope>
    <scope>FUNCTION</scope>
    <scope>BIOPHYSICOCHEMICAL PROPERTIES</scope>
</reference>
<reference key="5">
    <citation type="journal article" date="1999" name="Biochim. Biophys. Acta">
        <title>Identity of heart and liver L-3-hydroxyacyl coenzyme A dehydrogenase.</title>
        <authorList>
            <person name="He X.-Y."/>
            <person name="Zhang G."/>
            <person name="Blecha F."/>
            <person name="Yang S.-Y."/>
        </authorList>
    </citation>
    <scope>SHOWS THAT HEART AND LIVER ENZYMES ARE IDENTICAL</scope>
</reference>
<reference key="6">
    <citation type="journal article" date="1987" name="Proc. Natl. Acad. Sci. U.S.A.">
        <title>Structure of L-3-hydroxyacyl-coenzyme A dehydrogenase: preliminary chain tracing at 2.8-A resolution.</title>
        <authorList>
            <person name="Birktoff J.J."/>
            <person name="Holden H.M."/>
            <person name="Hamlin R."/>
            <person name="Xuong N.H."/>
            <person name="Banaszak L.J."/>
        </authorList>
    </citation>
    <scope>X-RAY CRYSTALLOGRAPHY (2.8 ANGSTROMS) OF 13-314 IN COMPLEX WITH NAD</scope>
</reference>
<reference key="7">
    <citation type="journal article" date="1999" name="Protein Sci.">
        <title>Pig heart short chain L-3-hydroxyacyl-CoA dehydrogenase revisited: sequence analysis and crystal structure determination.</title>
        <authorList>
            <person name="Barycki J.J."/>
            <person name="O'Brien L.K."/>
            <person name="Birktoft J.J."/>
            <person name="Strauss A.W."/>
            <person name="Banaszak L.J."/>
        </authorList>
    </citation>
    <scope>X-RAY CRYSTALLOGRAPHY (2.8 ANGSTROMS) OF 13-314</scope>
    <source>
        <tissue>Heart</tissue>
    </source>
</reference>
<comment type="function">
    <text evidence="2 3 5">Mitochondrial fatty acid beta-oxidation enzyme that catalyzes the third step of the beta-oxidation cycle for medium and short-chain 3-hydroxy fatty acyl-CoAs (C4 to C10) (PubMed:2817332, PubMed:9593854). Plays a role in the control of insulin secretion by inhibiting the activation of glutamate dehydrogenase 1 (GLUD1), an enzyme that has an important role in regulating amino acid-induced insulin secretion (By similarity). Plays a role in the maintenance of normal spermatogenesis through the reduction of fatty acid accumulation in the testes (By similarity).</text>
</comment>
<comment type="catalytic activity">
    <reaction evidence="5">
        <text>a (3S)-3-hydroxyacyl-CoA + NAD(+) = a 3-oxoacyl-CoA + NADH + H(+)</text>
        <dbReference type="Rhea" id="RHEA:22432"/>
        <dbReference type="ChEBI" id="CHEBI:15378"/>
        <dbReference type="ChEBI" id="CHEBI:57318"/>
        <dbReference type="ChEBI" id="CHEBI:57540"/>
        <dbReference type="ChEBI" id="CHEBI:57945"/>
        <dbReference type="ChEBI" id="CHEBI:90726"/>
        <dbReference type="EC" id="1.1.1.35"/>
    </reaction>
</comment>
<comment type="catalytic activity">
    <reaction evidence="3">
        <text>(3S)-3-hydroxybutanoyl-CoA + NAD(+) = acetoacetyl-CoA + NADH + H(+)</text>
        <dbReference type="Rhea" id="RHEA:30799"/>
        <dbReference type="ChEBI" id="CHEBI:15378"/>
        <dbReference type="ChEBI" id="CHEBI:57286"/>
        <dbReference type="ChEBI" id="CHEBI:57316"/>
        <dbReference type="ChEBI" id="CHEBI:57540"/>
        <dbReference type="ChEBI" id="CHEBI:57945"/>
    </reaction>
</comment>
<comment type="catalytic activity">
    <reaction evidence="3">
        <text>(3S)-hydroxydecanoyl-CoA + NAD(+) = 3-oxodecanoyl-CoA + NADH + H(+)</text>
        <dbReference type="Rhea" id="RHEA:31187"/>
        <dbReference type="ChEBI" id="CHEBI:15378"/>
        <dbReference type="ChEBI" id="CHEBI:57540"/>
        <dbReference type="ChEBI" id="CHEBI:57945"/>
        <dbReference type="ChEBI" id="CHEBI:62548"/>
        <dbReference type="ChEBI" id="CHEBI:62616"/>
    </reaction>
</comment>
<comment type="catalytic activity">
    <reaction evidence="3">
        <text>(3S)-hydroxyhexadecanoyl-CoA + NAD(+) = 3-oxohexadecanoyl-CoA + NADH + H(+)</text>
        <dbReference type="Rhea" id="RHEA:31159"/>
        <dbReference type="ChEBI" id="CHEBI:15378"/>
        <dbReference type="ChEBI" id="CHEBI:57349"/>
        <dbReference type="ChEBI" id="CHEBI:57540"/>
        <dbReference type="ChEBI" id="CHEBI:57945"/>
        <dbReference type="ChEBI" id="CHEBI:62613"/>
    </reaction>
</comment>
<comment type="biophysicochemical properties">
    <kinetics>
        <KM evidence="3">7.2 uM for (3S)-hydroxybutanoyl-CoA</KM>
        <KM evidence="3">2.9 uM for (3S)-hydroxydecanoyl-CoA</KM>
        <KM evidence="3">3 uM for (3S)-hydroxyhexadecanoyl-CoA</KM>
    </kinetics>
</comment>
<comment type="pathway">
    <text evidence="7">Lipid metabolism; fatty acid beta-oxidation.</text>
</comment>
<comment type="subunit">
    <text evidence="2 4 5">Homodimer (PubMed:3479790, PubMed:9593854). Interacts with GLUD1; this interaction inhibits the activation of glutamate dehydrogenase 1 (GLUD1) (By similarity).</text>
</comment>
<comment type="subcellular location">
    <subcellularLocation>
        <location evidence="2">Mitochondrion matrix</location>
    </subcellularLocation>
</comment>
<comment type="PTM">
    <text evidence="2">Succinylation at Lys-81, adjacent to a coenzyme A binding site. Desuccinylated by SIRT5.</text>
</comment>
<comment type="similarity">
    <text evidence="7">Belongs to the 3-hydroxyacyl-CoA dehydrogenase family.</text>
</comment>